<proteinExistence type="inferred from homology"/>
<evidence type="ECO:0000255" key="1">
    <source>
        <dbReference type="HAMAP-Rule" id="MF_01569"/>
    </source>
</evidence>
<protein>
    <recommendedName>
        <fullName evidence="1">Proline--tRNA ligase</fullName>
        <ecNumber evidence="1">6.1.1.15</ecNumber>
    </recommendedName>
    <alternativeName>
        <fullName evidence="1">Prolyl-tRNA synthetase</fullName>
        <shortName evidence="1">ProRS</shortName>
    </alternativeName>
</protein>
<gene>
    <name evidence="1" type="primary">proS</name>
    <name type="ordered locus">A1S_2819</name>
</gene>
<reference key="1">
    <citation type="journal article" date="2007" name="Genes Dev.">
        <title>New insights into Acinetobacter baumannii pathogenesis revealed by high-density pyrosequencing and transposon mutagenesis.</title>
        <authorList>
            <person name="Smith M.G."/>
            <person name="Gianoulis T.A."/>
            <person name="Pukatzki S."/>
            <person name="Mekalanos J.J."/>
            <person name="Ornston L.N."/>
            <person name="Gerstein M."/>
            <person name="Snyder M."/>
        </authorList>
    </citation>
    <scope>NUCLEOTIDE SEQUENCE [LARGE SCALE GENOMIC DNA]</scope>
    <source>
        <strain>ATCC 17978 / DSM 105126 / CIP 53.77 / LMG 1025 / NCDC KC755 / 5377</strain>
    </source>
</reference>
<keyword id="KW-0030">Aminoacyl-tRNA synthetase</keyword>
<keyword id="KW-0067">ATP-binding</keyword>
<keyword id="KW-0963">Cytoplasm</keyword>
<keyword id="KW-0436">Ligase</keyword>
<keyword id="KW-0547">Nucleotide-binding</keyword>
<keyword id="KW-0648">Protein biosynthesis</keyword>
<name>SYP_ACIBT</name>
<accession>A3M8I1</accession>
<comment type="function">
    <text evidence="1">Catalyzes the attachment of proline to tRNA(Pro) in a two-step reaction: proline is first activated by ATP to form Pro-AMP and then transferred to the acceptor end of tRNA(Pro). As ProRS can inadvertently accommodate and process non-cognate amino acids such as alanine and cysteine, to avoid such errors it has two additional distinct editing activities against alanine. One activity is designated as 'pretransfer' editing and involves the tRNA(Pro)-independent hydrolysis of activated Ala-AMP. The other activity is designated 'posttransfer' editing and involves deacylation of mischarged Ala-tRNA(Pro). The misacylated Cys-tRNA(Pro) is not edited by ProRS.</text>
</comment>
<comment type="catalytic activity">
    <reaction evidence="1">
        <text>tRNA(Pro) + L-proline + ATP = L-prolyl-tRNA(Pro) + AMP + diphosphate</text>
        <dbReference type="Rhea" id="RHEA:14305"/>
        <dbReference type="Rhea" id="RHEA-COMP:9700"/>
        <dbReference type="Rhea" id="RHEA-COMP:9702"/>
        <dbReference type="ChEBI" id="CHEBI:30616"/>
        <dbReference type="ChEBI" id="CHEBI:33019"/>
        <dbReference type="ChEBI" id="CHEBI:60039"/>
        <dbReference type="ChEBI" id="CHEBI:78442"/>
        <dbReference type="ChEBI" id="CHEBI:78532"/>
        <dbReference type="ChEBI" id="CHEBI:456215"/>
        <dbReference type="EC" id="6.1.1.15"/>
    </reaction>
</comment>
<comment type="subunit">
    <text evidence="1">Homodimer.</text>
</comment>
<comment type="subcellular location">
    <subcellularLocation>
        <location evidence="1">Cytoplasm</location>
    </subcellularLocation>
</comment>
<comment type="domain">
    <text evidence="1">Consists of three domains: the N-terminal catalytic domain, the editing domain and the C-terminal anticodon-binding domain.</text>
</comment>
<comment type="similarity">
    <text evidence="1">Belongs to the class-II aminoacyl-tRNA synthetase family. ProS type 1 subfamily.</text>
</comment>
<feature type="chain" id="PRO_1000199343" description="Proline--tRNA ligase">
    <location>
        <begin position="1"/>
        <end position="571"/>
    </location>
</feature>
<organism>
    <name type="scientific">Acinetobacter baumannii (strain ATCC 17978 / DSM 105126 / CIP 53.77 / LMG 1025 / NCDC KC755 / 5377)</name>
    <dbReference type="NCBI Taxonomy" id="400667"/>
    <lineage>
        <taxon>Bacteria</taxon>
        <taxon>Pseudomonadati</taxon>
        <taxon>Pseudomonadota</taxon>
        <taxon>Gammaproteobacteria</taxon>
        <taxon>Moraxellales</taxon>
        <taxon>Moraxellaceae</taxon>
        <taxon>Acinetobacter</taxon>
        <taxon>Acinetobacter calcoaceticus/baumannii complex</taxon>
    </lineage>
</organism>
<dbReference type="EC" id="6.1.1.15" evidence="1"/>
<dbReference type="EMBL" id="CP000521">
    <property type="protein sequence ID" value="ABO13225.2"/>
    <property type="molecule type" value="Genomic_DNA"/>
</dbReference>
<dbReference type="RefSeq" id="WP_001202763.1">
    <property type="nucleotide sequence ID" value="NZ_CP053098.1"/>
</dbReference>
<dbReference type="SMR" id="A3M8I1"/>
<dbReference type="KEGG" id="acb:A1S_2819"/>
<dbReference type="HOGENOM" id="CLU_016739_0_0_6"/>
<dbReference type="GO" id="GO:0005829">
    <property type="term" value="C:cytosol"/>
    <property type="evidence" value="ECO:0007669"/>
    <property type="project" value="TreeGrafter"/>
</dbReference>
<dbReference type="GO" id="GO:0002161">
    <property type="term" value="F:aminoacyl-tRNA deacylase activity"/>
    <property type="evidence" value="ECO:0007669"/>
    <property type="project" value="InterPro"/>
</dbReference>
<dbReference type="GO" id="GO:0005524">
    <property type="term" value="F:ATP binding"/>
    <property type="evidence" value="ECO:0007669"/>
    <property type="project" value="UniProtKB-UniRule"/>
</dbReference>
<dbReference type="GO" id="GO:0004827">
    <property type="term" value="F:proline-tRNA ligase activity"/>
    <property type="evidence" value="ECO:0007669"/>
    <property type="project" value="UniProtKB-UniRule"/>
</dbReference>
<dbReference type="GO" id="GO:0006433">
    <property type="term" value="P:prolyl-tRNA aminoacylation"/>
    <property type="evidence" value="ECO:0007669"/>
    <property type="project" value="UniProtKB-UniRule"/>
</dbReference>
<dbReference type="CDD" id="cd04334">
    <property type="entry name" value="ProRS-INS"/>
    <property type="match status" value="1"/>
</dbReference>
<dbReference type="CDD" id="cd00861">
    <property type="entry name" value="ProRS_anticodon_short"/>
    <property type="match status" value="1"/>
</dbReference>
<dbReference type="CDD" id="cd00779">
    <property type="entry name" value="ProRS_core_prok"/>
    <property type="match status" value="1"/>
</dbReference>
<dbReference type="FunFam" id="3.30.930.10:FF:000043">
    <property type="entry name" value="Proline--tRNA ligase"/>
    <property type="match status" value="1"/>
</dbReference>
<dbReference type="FunFam" id="3.30.930.10:FF:000097">
    <property type="entry name" value="Proline--tRNA ligase"/>
    <property type="match status" value="1"/>
</dbReference>
<dbReference type="Gene3D" id="3.40.50.800">
    <property type="entry name" value="Anticodon-binding domain"/>
    <property type="match status" value="1"/>
</dbReference>
<dbReference type="Gene3D" id="3.30.930.10">
    <property type="entry name" value="Bira Bifunctional Protein, Domain 2"/>
    <property type="match status" value="2"/>
</dbReference>
<dbReference type="HAMAP" id="MF_01569">
    <property type="entry name" value="Pro_tRNA_synth_type1"/>
    <property type="match status" value="1"/>
</dbReference>
<dbReference type="InterPro" id="IPR002314">
    <property type="entry name" value="aa-tRNA-synt_IIb"/>
</dbReference>
<dbReference type="InterPro" id="IPR006195">
    <property type="entry name" value="aa-tRNA-synth_II"/>
</dbReference>
<dbReference type="InterPro" id="IPR045864">
    <property type="entry name" value="aa-tRNA-synth_II/BPL/LPL"/>
</dbReference>
<dbReference type="InterPro" id="IPR004154">
    <property type="entry name" value="Anticodon-bd"/>
</dbReference>
<dbReference type="InterPro" id="IPR036621">
    <property type="entry name" value="Anticodon-bd_dom_sf"/>
</dbReference>
<dbReference type="InterPro" id="IPR002316">
    <property type="entry name" value="Pro-tRNA-ligase_IIa"/>
</dbReference>
<dbReference type="InterPro" id="IPR004500">
    <property type="entry name" value="Pro-tRNA-synth_IIa_bac-type"/>
</dbReference>
<dbReference type="InterPro" id="IPR023717">
    <property type="entry name" value="Pro-tRNA-Synthase_IIa_type1"/>
</dbReference>
<dbReference type="InterPro" id="IPR050062">
    <property type="entry name" value="Pro-tRNA_synthetase"/>
</dbReference>
<dbReference type="InterPro" id="IPR044140">
    <property type="entry name" value="ProRS_anticodon_short"/>
</dbReference>
<dbReference type="InterPro" id="IPR033730">
    <property type="entry name" value="ProRS_core_prok"/>
</dbReference>
<dbReference type="InterPro" id="IPR036754">
    <property type="entry name" value="YbaK/aa-tRNA-synt-asso_dom_sf"/>
</dbReference>
<dbReference type="InterPro" id="IPR007214">
    <property type="entry name" value="YbaK/aa-tRNA-synth-assoc-dom"/>
</dbReference>
<dbReference type="NCBIfam" id="NF006625">
    <property type="entry name" value="PRK09194.1"/>
    <property type="match status" value="1"/>
</dbReference>
<dbReference type="NCBIfam" id="TIGR00409">
    <property type="entry name" value="proS_fam_II"/>
    <property type="match status" value="1"/>
</dbReference>
<dbReference type="PANTHER" id="PTHR42753">
    <property type="entry name" value="MITOCHONDRIAL RIBOSOME PROTEIN L39/PROLYL-TRNA LIGASE FAMILY MEMBER"/>
    <property type="match status" value="1"/>
</dbReference>
<dbReference type="PANTHER" id="PTHR42753:SF2">
    <property type="entry name" value="PROLINE--TRNA LIGASE"/>
    <property type="match status" value="1"/>
</dbReference>
<dbReference type="Pfam" id="PF03129">
    <property type="entry name" value="HGTP_anticodon"/>
    <property type="match status" value="1"/>
</dbReference>
<dbReference type="Pfam" id="PF00587">
    <property type="entry name" value="tRNA-synt_2b"/>
    <property type="match status" value="1"/>
</dbReference>
<dbReference type="Pfam" id="PF04073">
    <property type="entry name" value="tRNA_edit"/>
    <property type="match status" value="1"/>
</dbReference>
<dbReference type="PIRSF" id="PIRSF001535">
    <property type="entry name" value="ProRS_1"/>
    <property type="match status" value="1"/>
</dbReference>
<dbReference type="PRINTS" id="PR01046">
    <property type="entry name" value="TRNASYNTHPRO"/>
</dbReference>
<dbReference type="SUPFAM" id="SSF52954">
    <property type="entry name" value="Class II aaRS ABD-related"/>
    <property type="match status" value="1"/>
</dbReference>
<dbReference type="SUPFAM" id="SSF55681">
    <property type="entry name" value="Class II aaRS and biotin synthetases"/>
    <property type="match status" value="1"/>
</dbReference>
<dbReference type="SUPFAM" id="SSF55826">
    <property type="entry name" value="YbaK/ProRS associated domain"/>
    <property type="match status" value="1"/>
</dbReference>
<dbReference type="PROSITE" id="PS50862">
    <property type="entry name" value="AA_TRNA_LIGASE_II"/>
    <property type="match status" value="1"/>
</dbReference>
<sequence>MRASRFLFATLRETPNDAEVISHQLMLRAGMIRKLASGLYTWLPMGTRVLKKVDAIVREEMNRSGAMEVFMPVTQPASLWEESGRYEQYGPELLRFKDRHDNPFVLGPTHEEVITDLARNELKSYKQLPVNFYQIQTKFRDEIRPRFGVMRSREFIMKDAYSFHATQESLQETYDVMYDTYSRIFTRLGLDFRPVQADTGSIGGSASHEFHVLAASGEDDIAFSTESDYAANVEMAEAVLVGERAAPTQEFKLVETPNQKTIADVCQFLNADPKQSVKALLVQGVADEKGNVPVVALFLRGDHELNEIKAEKHPLVAAPLAFATEEQLQAFGLTAGFTGPQGLVEKGITVIVDRAASVLSDFVAGANEADKHAVGVNWERDAQITEVFDLRNVVEGDPSPDGKGTLQIKRGIEVGHIFQLGTKYSEALGCKVLGEDGKPFTVTMGCYGIGVTRVVAAAIEQNYDDKGIIWPQAIAPFEIAIVPMNAHKSPRTLEAAEALYAELQAQGFDVLLDDRNERPGVKFSDLELMGIPHRIVIGEKGLDAGTFEYKGRRDAEASNLTKEELLAKLAR</sequence>